<reference key="1">
    <citation type="journal article" date="2011" name="Genome Biol.">
        <title>Comparative and functional genomics provide insights into the pathogenicity of dermatophytic fungi.</title>
        <authorList>
            <person name="Burmester A."/>
            <person name="Shelest E."/>
            <person name="Gloeckner G."/>
            <person name="Heddergott C."/>
            <person name="Schindler S."/>
            <person name="Staib P."/>
            <person name="Heidel A."/>
            <person name="Felder M."/>
            <person name="Petzold A."/>
            <person name="Szafranski K."/>
            <person name="Feuermann M."/>
            <person name="Pedruzzi I."/>
            <person name="Priebe S."/>
            <person name="Groth M."/>
            <person name="Winkler R."/>
            <person name="Li W."/>
            <person name="Kniemeyer O."/>
            <person name="Schroeckh V."/>
            <person name="Hertweck C."/>
            <person name="Hube B."/>
            <person name="White T.C."/>
            <person name="Platzer M."/>
            <person name="Guthke R."/>
            <person name="Heitman J."/>
            <person name="Woestemeyer J."/>
            <person name="Zipfel P.F."/>
            <person name="Monod M."/>
            <person name="Brakhage A.A."/>
        </authorList>
    </citation>
    <scope>NUCLEOTIDE SEQUENCE [LARGE SCALE GENOMIC DNA]</scope>
    <source>
        <strain>HKI 0517</strain>
    </source>
</reference>
<sequence length="596" mass="64750">MRLLKFVCLLASVAAAKPTPGASHKVIEHLDFVPEGWQMVGAADPAAIIDFWLAIERENPEKLYDTIYDVSTPGRAQYGKHLKREELDDLLRPRVETSESIISWLTNGGVNPQHIRDEGDWVKFSTNVKTAEKLMNTRFNVFKDNLNSVSKIRTLEYSVPVAISAHVQMIQPTTLFGRQKPQNSLILNPLTKDLESMSVEEFAASQCRSLVTTACLRELYGLGDRVTQARDDNRIGVSGFLEEYAQYRDLELFLSRFEPSAKGFNFSEGLIAGGKNTQGGPGSSTEANLDMQYVVGLSHKAKVTYYSTAGRGPLVPDLSQPSQASNNNEPYLEQLRYLVKLPKNQLPSVLTTSYGETEQSLPASYTKATCDLFAQLGTMGVSVIFSSGDTGPGSSCQTNDGKNATRFNPIYPASCPFVTSIGGTVGTGPERAVSFSSGGFSDRFPCPQYQDNAVKGYLKILGNQWSGLFDPNGRAFPDIAAQGSNYAVYDKGRMTGVSGTSASAPAMAAIIAQLNDFRLAKGSPVLGFLNPWIYSKGFSGFTDIVDGGSRGCTGYDIYSGLKAKKVPYASWNATKGWDPVTGFGTPNFQALTKVLP</sequence>
<accession>D4DBH6</accession>
<protein>
    <recommendedName>
        <fullName>Probable tripeptidyl-peptidase SED2</fullName>
        <ecNumber>3.4.14.10</ecNumber>
    </recommendedName>
    <alternativeName>
        <fullName>Sedolisin-B</fullName>
    </alternativeName>
</protein>
<dbReference type="EC" id="3.4.14.10"/>
<dbReference type="EMBL" id="ACYE01000226">
    <property type="protein sequence ID" value="EFE40784.1"/>
    <property type="molecule type" value="Genomic_DNA"/>
</dbReference>
<dbReference type="RefSeq" id="XP_003021402.1">
    <property type="nucleotide sequence ID" value="XM_003021356.1"/>
</dbReference>
<dbReference type="SMR" id="D4DBH6"/>
<dbReference type="GlyCosmos" id="D4DBH6">
    <property type="glycosylation" value="3 sites, No reported glycans"/>
</dbReference>
<dbReference type="GeneID" id="9578281"/>
<dbReference type="KEGG" id="tve:TRV_04476"/>
<dbReference type="HOGENOM" id="CLU_013783_3_0_1"/>
<dbReference type="OrthoDB" id="574at34384"/>
<dbReference type="Proteomes" id="UP000008383">
    <property type="component" value="Unassembled WGS sequence"/>
</dbReference>
<dbReference type="GO" id="GO:0005576">
    <property type="term" value="C:extracellular region"/>
    <property type="evidence" value="ECO:0007669"/>
    <property type="project" value="UniProtKB-SubCell"/>
</dbReference>
<dbReference type="GO" id="GO:0046872">
    <property type="term" value="F:metal ion binding"/>
    <property type="evidence" value="ECO:0007669"/>
    <property type="project" value="UniProtKB-KW"/>
</dbReference>
<dbReference type="GO" id="GO:0004252">
    <property type="term" value="F:serine-type endopeptidase activity"/>
    <property type="evidence" value="ECO:0007669"/>
    <property type="project" value="InterPro"/>
</dbReference>
<dbReference type="GO" id="GO:0008240">
    <property type="term" value="F:tripeptidyl-peptidase activity"/>
    <property type="evidence" value="ECO:0007669"/>
    <property type="project" value="UniProtKB-EC"/>
</dbReference>
<dbReference type="GO" id="GO:0006508">
    <property type="term" value="P:proteolysis"/>
    <property type="evidence" value="ECO:0007669"/>
    <property type="project" value="UniProtKB-KW"/>
</dbReference>
<dbReference type="CDD" id="cd04056">
    <property type="entry name" value="Peptidases_S53"/>
    <property type="match status" value="1"/>
</dbReference>
<dbReference type="CDD" id="cd11377">
    <property type="entry name" value="Pro-peptidase_S53"/>
    <property type="match status" value="1"/>
</dbReference>
<dbReference type="FunFam" id="3.40.50.200:FF:000015">
    <property type="entry name" value="Tripeptidyl peptidase A"/>
    <property type="match status" value="1"/>
</dbReference>
<dbReference type="Gene3D" id="3.40.50.200">
    <property type="entry name" value="Peptidase S8/S53 domain"/>
    <property type="match status" value="1"/>
</dbReference>
<dbReference type="InterPro" id="IPR000209">
    <property type="entry name" value="Peptidase_S8/S53_dom"/>
</dbReference>
<dbReference type="InterPro" id="IPR036852">
    <property type="entry name" value="Peptidase_S8/S53_dom_sf"/>
</dbReference>
<dbReference type="InterPro" id="IPR023828">
    <property type="entry name" value="Peptidase_S8_Ser-AS"/>
</dbReference>
<dbReference type="InterPro" id="IPR015366">
    <property type="entry name" value="S53_propep"/>
</dbReference>
<dbReference type="InterPro" id="IPR030400">
    <property type="entry name" value="Sedolisin_dom"/>
</dbReference>
<dbReference type="InterPro" id="IPR050819">
    <property type="entry name" value="Tripeptidyl-peptidase_I"/>
</dbReference>
<dbReference type="PANTHER" id="PTHR14218">
    <property type="entry name" value="PROTEASE S8 TRIPEPTIDYL PEPTIDASE I CLN2"/>
    <property type="match status" value="1"/>
</dbReference>
<dbReference type="PANTHER" id="PTHR14218:SF32">
    <property type="entry name" value="TRIPEPTIDYL PEPTIDASE SED3 (AFU_ORTHOLOGUE AFUA_3G08930)"/>
    <property type="match status" value="1"/>
</dbReference>
<dbReference type="Pfam" id="PF00082">
    <property type="entry name" value="Peptidase_S8"/>
    <property type="match status" value="1"/>
</dbReference>
<dbReference type="Pfam" id="PF09286">
    <property type="entry name" value="Pro-kuma_activ"/>
    <property type="match status" value="1"/>
</dbReference>
<dbReference type="SMART" id="SM00944">
    <property type="entry name" value="Pro-kuma_activ"/>
    <property type="match status" value="1"/>
</dbReference>
<dbReference type="SUPFAM" id="SSF54897">
    <property type="entry name" value="Protease propeptides/inhibitors"/>
    <property type="match status" value="1"/>
</dbReference>
<dbReference type="SUPFAM" id="SSF52743">
    <property type="entry name" value="Subtilisin-like"/>
    <property type="match status" value="1"/>
</dbReference>
<dbReference type="PROSITE" id="PS51695">
    <property type="entry name" value="SEDOLISIN"/>
    <property type="match status" value="1"/>
</dbReference>
<feature type="signal peptide" evidence="2">
    <location>
        <begin position="1"/>
        <end position="16"/>
    </location>
</feature>
<feature type="propeptide" id="PRO_0000397831" description="Removed in mature form" evidence="1">
    <location>
        <begin position="17"/>
        <end position="203"/>
    </location>
</feature>
<feature type="chain" id="PRO_0000397832" description="Probable tripeptidyl-peptidase SED2">
    <location>
        <begin position="204"/>
        <end position="596"/>
    </location>
</feature>
<feature type="domain" description="Peptidase S53">
    <location>
        <begin position="210"/>
        <end position="596"/>
    </location>
</feature>
<feature type="active site" description="Charge relay system" evidence="1">
    <location>
        <position position="286"/>
    </location>
</feature>
<feature type="active site" description="Charge relay system" evidence="1">
    <location>
        <position position="290"/>
    </location>
</feature>
<feature type="active site" description="Charge relay system" evidence="1">
    <location>
        <position position="501"/>
    </location>
</feature>
<feature type="binding site" evidence="1">
    <location>
        <position position="543"/>
    </location>
    <ligand>
        <name>Ca(2+)</name>
        <dbReference type="ChEBI" id="CHEBI:29108"/>
    </ligand>
</feature>
<feature type="binding site" evidence="1">
    <location>
        <position position="544"/>
    </location>
    <ligand>
        <name>Ca(2+)</name>
        <dbReference type="ChEBI" id="CHEBI:29108"/>
    </ligand>
</feature>
<feature type="binding site" evidence="1">
    <location>
        <position position="576"/>
    </location>
    <ligand>
        <name>Ca(2+)</name>
        <dbReference type="ChEBI" id="CHEBI:29108"/>
    </ligand>
</feature>
<feature type="binding site" evidence="1">
    <location>
        <position position="578"/>
    </location>
    <ligand>
        <name>Ca(2+)</name>
        <dbReference type="ChEBI" id="CHEBI:29108"/>
    </ligand>
</feature>
<feature type="glycosylation site" description="N-linked (GlcNAc...) asparagine" evidence="2">
    <location>
        <position position="265"/>
    </location>
</feature>
<feature type="glycosylation site" description="N-linked (GlcNAc...) asparagine" evidence="2">
    <location>
        <position position="403"/>
    </location>
</feature>
<feature type="glycosylation site" description="N-linked (GlcNAc...) asparagine" evidence="2">
    <location>
        <position position="572"/>
    </location>
</feature>
<gene>
    <name type="primary">SED2</name>
    <name type="ORF">TRV_04476</name>
</gene>
<organism>
    <name type="scientific">Trichophyton verrucosum (strain HKI 0517)</name>
    <dbReference type="NCBI Taxonomy" id="663202"/>
    <lineage>
        <taxon>Eukaryota</taxon>
        <taxon>Fungi</taxon>
        <taxon>Dikarya</taxon>
        <taxon>Ascomycota</taxon>
        <taxon>Pezizomycotina</taxon>
        <taxon>Eurotiomycetes</taxon>
        <taxon>Eurotiomycetidae</taxon>
        <taxon>Onygenales</taxon>
        <taxon>Arthrodermataceae</taxon>
        <taxon>Trichophyton</taxon>
    </lineage>
</organism>
<proteinExistence type="inferred from homology"/>
<comment type="function">
    <text evidence="1">Secreted tripeptidyl-peptidase which degrades proteins at acidic pHs and is involved in virulence.</text>
</comment>
<comment type="catalytic activity">
    <reaction>
        <text>Release of an N-terminal tripeptide from a polypeptide.</text>
        <dbReference type="EC" id="3.4.14.10"/>
    </reaction>
</comment>
<comment type="cofactor">
    <cofactor evidence="1">
        <name>Ca(2+)</name>
        <dbReference type="ChEBI" id="CHEBI:29108"/>
    </cofactor>
    <text evidence="1">Binds 1 Ca(2+) ion per subunit.</text>
</comment>
<comment type="subcellular location">
    <subcellularLocation>
        <location evidence="1">Secreted</location>
        <location evidence="1">Extracellular space</location>
    </subcellularLocation>
</comment>
<name>SED2_TRIVH</name>
<keyword id="KW-0106">Calcium</keyword>
<keyword id="KW-0325">Glycoprotein</keyword>
<keyword id="KW-0378">Hydrolase</keyword>
<keyword id="KW-0479">Metal-binding</keyword>
<keyword id="KW-0645">Protease</keyword>
<keyword id="KW-0964">Secreted</keyword>
<keyword id="KW-0720">Serine protease</keyword>
<keyword id="KW-0732">Signal</keyword>
<keyword id="KW-0843">Virulence</keyword>
<keyword id="KW-0865">Zymogen</keyword>
<evidence type="ECO:0000250" key="1"/>
<evidence type="ECO:0000255" key="2"/>